<accession>Q9SRQ1</accession>
<accession>Q944R6</accession>
<comment type="function">
    <text evidence="3 4">Involved in the chlorophyll breakdown by its action in nonpolar primary fluorescent chlorophyll catabolite (pFCC) decarbonylation (PubMed:23723324, Ref.6). Involved in the formation of major chlorophyll breakdown products, including non-fluorescent dioxobilin-type chlorophyll catabolites (NDCCs), during leaf senescence (PubMed:23723324).</text>
</comment>
<comment type="catalytic activity">
    <molecule>Cytochrome P450 89A9</molecule>
    <reaction evidence="3">
        <text>primary fluorescent chlorophyll catabolite + reduced [NADPH--hemoprotein reductase] + O2 = primary fluorescent dioxobilin-type chlorophyll catabolite + formate + oxidized [NADPH--hemoprotein reductase] + 2 H(+)</text>
        <dbReference type="Rhea" id="RHEA:67172"/>
        <dbReference type="Rhea" id="RHEA-COMP:11964"/>
        <dbReference type="Rhea" id="RHEA-COMP:11965"/>
        <dbReference type="ChEBI" id="CHEBI:15378"/>
        <dbReference type="ChEBI" id="CHEBI:15379"/>
        <dbReference type="ChEBI" id="CHEBI:15740"/>
        <dbReference type="ChEBI" id="CHEBI:57618"/>
        <dbReference type="ChEBI" id="CHEBI:58210"/>
        <dbReference type="ChEBI" id="CHEBI:77670"/>
        <dbReference type="ChEBI" id="CHEBI:167885"/>
    </reaction>
</comment>
<comment type="cofactor">
    <cofactor evidence="1">
        <name>heme</name>
        <dbReference type="ChEBI" id="CHEBI:30413"/>
    </cofactor>
</comment>
<comment type="pathway">
    <text evidence="3 4">Porphyrin-containing compound metabolism; chlorophyll degradation.</text>
</comment>
<comment type="subcellular location">
    <subcellularLocation>
        <location evidence="3 4">Endoplasmic reticulum membrane</location>
        <topology evidence="2">Single-pass type II membrane protein</topology>
    </subcellularLocation>
</comment>
<comment type="disruption phenotype">
    <text evidence="3">Impaired accumulation of non-fluorescent dioxobilin-type chlorophyll catabolites (NDCCs) compensated by higher amounts of non-fluorescent chlorophyll catabolites (NCCs) in senescing leaves.</text>
</comment>
<comment type="similarity">
    <text evidence="6">Belongs to the cytochrome P450 family.</text>
</comment>
<organism>
    <name type="scientific">Arabidopsis thaliana</name>
    <name type="common">Mouse-ear cress</name>
    <dbReference type="NCBI Taxonomy" id="3702"/>
    <lineage>
        <taxon>Eukaryota</taxon>
        <taxon>Viridiplantae</taxon>
        <taxon>Streptophyta</taxon>
        <taxon>Embryophyta</taxon>
        <taxon>Tracheophyta</taxon>
        <taxon>Spermatophyta</taxon>
        <taxon>Magnoliopsida</taxon>
        <taxon>eudicotyledons</taxon>
        <taxon>Gunneridae</taxon>
        <taxon>Pentapetalae</taxon>
        <taxon>rosids</taxon>
        <taxon>malvids</taxon>
        <taxon>Brassicales</taxon>
        <taxon>Brassicaceae</taxon>
        <taxon>Camelineae</taxon>
        <taxon>Arabidopsis</taxon>
    </lineage>
</organism>
<keyword id="KW-0881">Chlorophyll catabolism</keyword>
<keyword id="KW-0256">Endoplasmic reticulum</keyword>
<keyword id="KW-0349">Heme</keyword>
<keyword id="KW-0408">Iron</keyword>
<keyword id="KW-0472">Membrane</keyword>
<keyword id="KW-0479">Metal-binding</keyword>
<keyword id="KW-0503">Monooxygenase</keyword>
<keyword id="KW-0560">Oxidoreductase</keyword>
<keyword id="KW-1185">Reference proteome</keyword>
<keyword id="KW-0735">Signal-anchor</keyword>
<keyword id="KW-0812">Transmembrane</keyword>
<keyword id="KW-1133">Transmembrane helix</keyword>
<evidence type="ECO:0000250" key="1">
    <source>
        <dbReference type="UniProtKB" id="Q96242"/>
    </source>
</evidence>
<evidence type="ECO:0000255" key="2"/>
<evidence type="ECO:0000269" key="3">
    <source>
    </source>
</evidence>
<evidence type="ECO:0000269" key="4">
    <source ref="6"/>
</evidence>
<evidence type="ECO:0000303" key="5">
    <source>
    </source>
</evidence>
<evidence type="ECO:0000305" key="6"/>
<evidence type="ECO:0000312" key="7">
    <source>
        <dbReference type="Araport" id="AT3G03470"/>
    </source>
</evidence>
<evidence type="ECO:0000312" key="8">
    <source>
        <dbReference type="EMBL" id="AAF01588.1"/>
    </source>
</evidence>
<reference key="1">
    <citation type="journal article" date="2000" name="Nature">
        <title>Sequence and analysis of chromosome 3 of the plant Arabidopsis thaliana.</title>
        <authorList>
            <person name="Salanoubat M."/>
            <person name="Lemcke K."/>
            <person name="Rieger M."/>
            <person name="Ansorge W."/>
            <person name="Unseld M."/>
            <person name="Fartmann B."/>
            <person name="Valle G."/>
            <person name="Bloecker H."/>
            <person name="Perez-Alonso M."/>
            <person name="Obermaier B."/>
            <person name="Delseny M."/>
            <person name="Boutry M."/>
            <person name="Grivell L.A."/>
            <person name="Mache R."/>
            <person name="Puigdomenech P."/>
            <person name="De Simone V."/>
            <person name="Choisne N."/>
            <person name="Artiguenave F."/>
            <person name="Robert C."/>
            <person name="Brottier P."/>
            <person name="Wincker P."/>
            <person name="Cattolico L."/>
            <person name="Weissenbach J."/>
            <person name="Saurin W."/>
            <person name="Quetier F."/>
            <person name="Schaefer M."/>
            <person name="Mueller-Auer S."/>
            <person name="Gabel C."/>
            <person name="Fuchs M."/>
            <person name="Benes V."/>
            <person name="Wurmbach E."/>
            <person name="Drzonek H."/>
            <person name="Erfle H."/>
            <person name="Jordan N."/>
            <person name="Bangert S."/>
            <person name="Wiedelmann R."/>
            <person name="Kranz H."/>
            <person name="Voss H."/>
            <person name="Holland R."/>
            <person name="Brandt P."/>
            <person name="Nyakatura G."/>
            <person name="Vezzi A."/>
            <person name="D'Angelo M."/>
            <person name="Pallavicini A."/>
            <person name="Toppo S."/>
            <person name="Simionati B."/>
            <person name="Conrad A."/>
            <person name="Hornischer K."/>
            <person name="Kauer G."/>
            <person name="Loehnert T.-H."/>
            <person name="Nordsiek G."/>
            <person name="Reichelt J."/>
            <person name="Scharfe M."/>
            <person name="Schoen O."/>
            <person name="Bargues M."/>
            <person name="Terol J."/>
            <person name="Climent J."/>
            <person name="Navarro P."/>
            <person name="Collado C."/>
            <person name="Perez-Perez A."/>
            <person name="Ottenwaelder B."/>
            <person name="Duchemin D."/>
            <person name="Cooke R."/>
            <person name="Laudie M."/>
            <person name="Berger-Llauro C."/>
            <person name="Purnelle B."/>
            <person name="Masuy D."/>
            <person name="de Haan M."/>
            <person name="Maarse A.C."/>
            <person name="Alcaraz J.-P."/>
            <person name="Cottet A."/>
            <person name="Casacuberta E."/>
            <person name="Monfort A."/>
            <person name="Argiriou A."/>
            <person name="Flores M."/>
            <person name="Liguori R."/>
            <person name="Vitale D."/>
            <person name="Mannhaupt G."/>
            <person name="Haase D."/>
            <person name="Schoof H."/>
            <person name="Rudd S."/>
            <person name="Zaccaria P."/>
            <person name="Mewes H.-W."/>
            <person name="Mayer K.F.X."/>
            <person name="Kaul S."/>
            <person name="Town C.D."/>
            <person name="Koo H.L."/>
            <person name="Tallon L.J."/>
            <person name="Jenkins J."/>
            <person name="Rooney T."/>
            <person name="Rizzo M."/>
            <person name="Walts A."/>
            <person name="Utterback T."/>
            <person name="Fujii C.Y."/>
            <person name="Shea T.P."/>
            <person name="Creasy T.H."/>
            <person name="Haas B."/>
            <person name="Maiti R."/>
            <person name="Wu D."/>
            <person name="Peterson J."/>
            <person name="Van Aken S."/>
            <person name="Pai G."/>
            <person name="Militscher J."/>
            <person name="Sellers P."/>
            <person name="Gill J.E."/>
            <person name="Feldblyum T.V."/>
            <person name="Preuss D."/>
            <person name="Lin X."/>
            <person name="Nierman W.C."/>
            <person name="Salzberg S.L."/>
            <person name="White O."/>
            <person name="Venter J.C."/>
            <person name="Fraser C.M."/>
            <person name="Kaneko T."/>
            <person name="Nakamura Y."/>
            <person name="Sato S."/>
            <person name="Kato T."/>
            <person name="Asamizu E."/>
            <person name="Sasamoto S."/>
            <person name="Kimura T."/>
            <person name="Idesawa K."/>
            <person name="Kawashima K."/>
            <person name="Kishida Y."/>
            <person name="Kiyokawa C."/>
            <person name="Kohara M."/>
            <person name="Matsumoto M."/>
            <person name="Matsuno A."/>
            <person name="Muraki A."/>
            <person name="Nakayama S."/>
            <person name="Nakazaki N."/>
            <person name="Shinpo S."/>
            <person name="Takeuchi C."/>
            <person name="Wada T."/>
            <person name="Watanabe A."/>
            <person name="Yamada M."/>
            <person name="Yasuda M."/>
            <person name="Tabata S."/>
        </authorList>
    </citation>
    <scope>NUCLEOTIDE SEQUENCE [LARGE SCALE GENOMIC DNA]</scope>
    <source>
        <strain>cv. Columbia</strain>
    </source>
</reference>
<reference key="2">
    <citation type="journal article" date="2017" name="Plant J.">
        <title>Araport11: a complete reannotation of the Arabidopsis thaliana reference genome.</title>
        <authorList>
            <person name="Cheng C.Y."/>
            <person name="Krishnakumar V."/>
            <person name="Chan A.P."/>
            <person name="Thibaud-Nissen F."/>
            <person name="Schobel S."/>
            <person name="Town C.D."/>
        </authorList>
    </citation>
    <scope>GENOME REANNOTATION</scope>
    <source>
        <strain>cv. Columbia</strain>
    </source>
</reference>
<reference key="3">
    <citation type="journal article" date="2003" name="Science">
        <title>Empirical analysis of transcriptional activity in the Arabidopsis genome.</title>
        <authorList>
            <person name="Yamada K."/>
            <person name="Lim J."/>
            <person name="Dale J.M."/>
            <person name="Chen H."/>
            <person name="Shinn P."/>
            <person name="Palm C.J."/>
            <person name="Southwick A.M."/>
            <person name="Wu H.C."/>
            <person name="Kim C.J."/>
            <person name="Nguyen M."/>
            <person name="Pham P.K."/>
            <person name="Cheuk R.F."/>
            <person name="Karlin-Newmann G."/>
            <person name="Liu S.X."/>
            <person name="Lam B."/>
            <person name="Sakano H."/>
            <person name="Wu T."/>
            <person name="Yu G."/>
            <person name="Miranda M."/>
            <person name="Quach H.L."/>
            <person name="Tripp M."/>
            <person name="Chang C.H."/>
            <person name="Lee J.M."/>
            <person name="Toriumi M.J."/>
            <person name="Chan M.M."/>
            <person name="Tang C.C."/>
            <person name="Onodera C.S."/>
            <person name="Deng J.M."/>
            <person name="Akiyama K."/>
            <person name="Ansari Y."/>
            <person name="Arakawa T."/>
            <person name="Banh J."/>
            <person name="Banno F."/>
            <person name="Bowser L."/>
            <person name="Brooks S.Y."/>
            <person name="Carninci P."/>
            <person name="Chao Q."/>
            <person name="Choy N."/>
            <person name="Enju A."/>
            <person name="Goldsmith A.D."/>
            <person name="Gurjal M."/>
            <person name="Hansen N.F."/>
            <person name="Hayashizaki Y."/>
            <person name="Johnson-Hopson C."/>
            <person name="Hsuan V.W."/>
            <person name="Iida K."/>
            <person name="Karnes M."/>
            <person name="Khan S."/>
            <person name="Koesema E."/>
            <person name="Ishida J."/>
            <person name="Jiang P.X."/>
            <person name="Jones T."/>
            <person name="Kawai J."/>
            <person name="Kamiya A."/>
            <person name="Meyers C."/>
            <person name="Nakajima M."/>
            <person name="Narusaka M."/>
            <person name="Seki M."/>
            <person name="Sakurai T."/>
            <person name="Satou M."/>
            <person name="Tamse R."/>
            <person name="Vaysberg M."/>
            <person name="Wallender E.K."/>
            <person name="Wong C."/>
            <person name="Yamamura Y."/>
            <person name="Yuan S."/>
            <person name="Shinozaki K."/>
            <person name="Davis R.W."/>
            <person name="Theologis A."/>
            <person name="Ecker J.R."/>
        </authorList>
    </citation>
    <scope>NUCLEOTIDE SEQUENCE [LARGE SCALE MRNA]</scope>
    <source>
        <strain>cv. Columbia</strain>
    </source>
</reference>
<reference key="4">
    <citation type="submission" date="2004-10" db="EMBL/GenBank/DDBJ databases">
        <title>Arabidopsis ORF clones.</title>
        <authorList>
            <person name="Cheuk R."/>
            <person name="Chen H."/>
            <person name="Kim C.J."/>
            <person name="Shinn P."/>
            <person name="Ecker J.R."/>
        </authorList>
    </citation>
    <scope>NUCLEOTIDE SEQUENCE [LARGE SCALE MRNA]</scope>
    <source>
        <strain>cv. Columbia</strain>
    </source>
</reference>
<reference key="5">
    <citation type="journal article" date="2011" name="Biochim. Biophys. Acta">
        <title>Chlorophyll breakdown in higher plants.</title>
        <authorList>
            <person name="Hoertensteiner S."/>
            <person name="Kraeutler B."/>
        </authorList>
    </citation>
    <scope>REVIEW</scope>
</reference>
<reference key="6">
    <citation type="unpublished observations" date="2012-01">
        <title>A cytochrome P450 monooxygenase is involved in chlorophyll breakdown in Arabidopsis thaliana.</title>
        <authorList>
            <person name="Christ B."/>
            <person name="Bichsel N."/>
            <person name="Hoertensteiner S."/>
        </authorList>
    </citation>
    <scope>FUNCTION</scope>
    <scope>SUBCELLULAR LOCATION</scope>
    <scope>PATHWAY</scope>
</reference>
<reference key="7">
    <citation type="journal article" date="2013" name="Plant Cell">
        <title>Cytochrome P450 CYP89A9 is involved in the formation of major chlorophyll catabolites during leaf senescence in Arabidopsis.</title>
        <authorList>
            <person name="Christ B."/>
            <person name="Suessenbacher I."/>
            <person name="Moser S."/>
            <person name="Bichsel N."/>
            <person name="Egert A."/>
            <person name="Mueller T."/>
            <person name="Kraeutler B."/>
            <person name="Hoertensteiner S."/>
        </authorList>
    </citation>
    <scope>FUNCTION</scope>
    <scope>DISRUPTION PHENOTYPE</scope>
    <scope>CATALYTIC ACTIVITY</scope>
    <scope>PATHWAY</scope>
    <scope>SUBCELLULAR LOCATION</scope>
    <source>
        <strain>cv. Columbia</strain>
        <strain>cv. Landsberg erecta</strain>
    </source>
</reference>
<reference key="8">
    <citation type="journal article" date="2014" name="Chemistry">
        <title>Hydroxymethylated phyllobilins: a puzzling new feature of the dioxobilin branch of chlorophyll breakdown.</title>
        <authorList>
            <person name="Suessenbacher I."/>
            <person name="Christ B."/>
            <person name="Hoertensteiner S."/>
            <person name="Kraeutler B."/>
        </authorList>
    </citation>
    <scope>REVIEW</scope>
</reference>
<protein>
    <recommendedName>
        <fullName evidence="5">Cytochrome P450 89A9</fullName>
        <ecNumber evidence="3">1.14.14.-</ecNumber>
    </recommendedName>
</protein>
<proteinExistence type="evidence at protein level"/>
<name>C89A9_ARATH</name>
<dbReference type="EC" id="1.14.14.-" evidence="3"/>
<dbReference type="EMBL" id="AC009895">
    <property type="protein sequence ID" value="AAF01588.1"/>
    <property type="molecule type" value="Genomic_DNA"/>
</dbReference>
<dbReference type="EMBL" id="CP002686">
    <property type="protein sequence ID" value="AEE73948.1"/>
    <property type="molecule type" value="Genomic_DNA"/>
</dbReference>
<dbReference type="EMBL" id="AF424581">
    <property type="protein sequence ID" value="AAL11575.1"/>
    <property type="molecule type" value="mRNA"/>
</dbReference>
<dbReference type="EMBL" id="BT015915">
    <property type="protein sequence ID" value="AAU95451.1"/>
    <property type="molecule type" value="mRNA"/>
</dbReference>
<dbReference type="RefSeq" id="NP_186997.1">
    <property type="nucleotide sequence ID" value="NM_111218.4"/>
</dbReference>
<dbReference type="SMR" id="Q9SRQ1"/>
<dbReference type="FunCoup" id="Q9SRQ1">
    <property type="interactions" value="77"/>
</dbReference>
<dbReference type="STRING" id="3702.Q9SRQ1"/>
<dbReference type="PaxDb" id="3702-AT3G03470.1"/>
<dbReference type="ProteomicsDB" id="223857"/>
<dbReference type="EnsemblPlants" id="AT3G03470.1">
    <property type="protein sequence ID" value="AT3G03470.1"/>
    <property type="gene ID" value="AT3G03470"/>
</dbReference>
<dbReference type="GeneID" id="821250"/>
<dbReference type="Gramene" id="AT3G03470.1">
    <property type="protein sequence ID" value="AT3G03470.1"/>
    <property type="gene ID" value="AT3G03470"/>
</dbReference>
<dbReference type="KEGG" id="ath:AT3G03470"/>
<dbReference type="Araport" id="AT3G03470"/>
<dbReference type="TAIR" id="AT3G03470">
    <property type="gene designation" value="CYP89A9"/>
</dbReference>
<dbReference type="eggNOG" id="KOG0156">
    <property type="taxonomic scope" value="Eukaryota"/>
</dbReference>
<dbReference type="HOGENOM" id="CLU_001570_4_0_1"/>
<dbReference type="InParanoid" id="Q9SRQ1"/>
<dbReference type="OMA" id="AIMVKYP"/>
<dbReference type="OrthoDB" id="1055148at2759"/>
<dbReference type="PhylomeDB" id="Q9SRQ1"/>
<dbReference type="BioCyc" id="ARA:AT3G03470-MONOMER"/>
<dbReference type="UniPathway" id="UPA00674"/>
<dbReference type="PRO" id="PR:Q9SRQ1"/>
<dbReference type="Proteomes" id="UP000006548">
    <property type="component" value="Chromosome 3"/>
</dbReference>
<dbReference type="ExpressionAtlas" id="Q9SRQ1">
    <property type="expression patterns" value="baseline and differential"/>
</dbReference>
<dbReference type="GO" id="GO:0005829">
    <property type="term" value="C:cytosol"/>
    <property type="evidence" value="ECO:0007005"/>
    <property type="project" value="TAIR"/>
</dbReference>
<dbReference type="GO" id="GO:0005789">
    <property type="term" value="C:endoplasmic reticulum membrane"/>
    <property type="evidence" value="ECO:0000314"/>
    <property type="project" value="UniProtKB"/>
</dbReference>
<dbReference type="GO" id="GO:0106371">
    <property type="term" value="F:fluorescent chlorophyll catabolite monooxygenase (deformylase) activity"/>
    <property type="evidence" value="ECO:0000314"/>
    <property type="project" value="UniProtKB"/>
</dbReference>
<dbReference type="GO" id="GO:0020037">
    <property type="term" value="F:heme binding"/>
    <property type="evidence" value="ECO:0007669"/>
    <property type="project" value="InterPro"/>
</dbReference>
<dbReference type="GO" id="GO:0005506">
    <property type="term" value="F:iron ion binding"/>
    <property type="evidence" value="ECO:0007669"/>
    <property type="project" value="InterPro"/>
</dbReference>
<dbReference type="GO" id="GO:0003958">
    <property type="term" value="F:NADPH-hemoprotein reductase activity"/>
    <property type="evidence" value="ECO:0000315"/>
    <property type="project" value="UniProtKB"/>
</dbReference>
<dbReference type="GO" id="GO:0016709">
    <property type="term" value="F:oxidoreductase activity, acting on paired donors, with incorporation or reduction of molecular oxygen, NAD(P)H as one donor, and incorporation of one atom of oxygen"/>
    <property type="evidence" value="ECO:0000315"/>
    <property type="project" value="UniProtKB"/>
</dbReference>
<dbReference type="GO" id="GO:0033310">
    <property type="term" value="P:chlorophyll a catabolic process"/>
    <property type="evidence" value="ECO:0000314"/>
    <property type="project" value="TAIR"/>
</dbReference>
<dbReference type="GO" id="GO:0015996">
    <property type="term" value="P:chlorophyll catabolic process"/>
    <property type="evidence" value="ECO:0000315"/>
    <property type="project" value="UniProtKB"/>
</dbReference>
<dbReference type="CDD" id="cd11075">
    <property type="entry name" value="CYP77_89"/>
    <property type="match status" value="1"/>
</dbReference>
<dbReference type="FunFam" id="1.10.630.10:FF:000012">
    <property type="entry name" value="Cytochrome P450 family protein"/>
    <property type="match status" value="1"/>
</dbReference>
<dbReference type="Gene3D" id="1.10.630.10">
    <property type="entry name" value="Cytochrome P450"/>
    <property type="match status" value="1"/>
</dbReference>
<dbReference type="InterPro" id="IPR001128">
    <property type="entry name" value="Cyt_P450"/>
</dbReference>
<dbReference type="InterPro" id="IPR017972">
    <property type="entry name" value="Cyt_P450_CS"/>
</dbReference>
<dbReference type="InterPro" id="IPR002401">
    <property type="entry name" value="Cyt_P450_E_grp-I"/>
</dbReference>
<dbReference type="InterPro" id="IPR036396">
    <property type="entry name" value="Cyt_P450_sf"/>
</dbReference>
<dbReference type="InterPro" id="IPR051103">
    <property type="entry name" value="Plant_metabolite_P450s"/>
</dbReference>
<dbReference type="PANTHER" id="PTHR24298:SF900">
    <property type="entry name" value="CYTOCHROME P450 89A9"/>
    <property type="match status" value="1"/>
</dbReference>
<dbReference type="PANTHER" id="PTHR24298">
    <property type="entry name" value="FLAVONOID 3'-MONOOXYGENASE-RELATED"/>
    <property type="match status" value="1"/>
</dbReference>
<dbReference type="Pfam" id="PF00067">
    <property type="entry name" value="p450"/>
    <property type="match status" value="1"/>
</dbReference>
<dbReference type="PRINTS" id="PR00463">
    <property type="entry name" value="EP450I"/>
</dbReference>
<dbReference type="PRINTS" id="PR00385">
    <property type="entry name" value="P450"/>
</dbReference>
<dbReference type="SUPFAM" id="SSF48264">
    <property type="entry name" value="Cytochrome P450"/>
    <property type="match status" value="1"/>
</dbReference>
<dbReference type="PROSITE" id="PS00086">
    <property type="entry name" value="CYTOCHROME_P450"/>
    <property type="match status" value="1"/>
</dbReference>
<sequence length="511" mass="59255">MEITTIIFLIISSLTFSIFLKLIFFFSTHKLPPGPPRFPVIGNIIWLKKNNFSDFQGVLRDLASRHGPIITLHVGSKPSIWVTDRSLAHQALVQNGAVFSDRSLALPTTKVITSNQHDIHSSVYGSLWRTLRRNLTSEILQPSRVKAHAPSRKWSLEILVDLFETEQREKGHISDALDHLRHAMFYLLALMCFGEKLRKEEIREIEEAQYQMLISYTKFSVLNIFPSVTKFLLRRKWKEFLELRKSQESVILRYVNARSKETTGDVLCYVDTLLNLEIPTEEKEGGKKRKLSDSEIVSLCSEFLNAATDPTATSMQWIMAIMVKYPEIQRKVYEEMKTVFAGEEEEREEIREEDLGKLSYLKAVILECLRRHPPGHYLSYHKVTHDTVLGGFLIPRQGTINFMVGEMGRDPKIWEDPLTFKPERFLENGEACDFDMTGTREIKMMPFGAGRRMCPGYALSLLHLEYYVANLVWKFEWKCVEGEEVDLSEKQQFITMVMKNPFKANIYPRRK</sequence>
<feature type="chain" id="PRO_0000416128" description="Cytochrome P450 89A9">
    <location>
        <begin position="1"/>
        <end position="511"/>
    </location>
</feature>
<feature type="transmembrane region" description="Helical; Signal-anchor for type II membrane protein" evidence="2">
    <location>
        <begin position="6"/>
        <end position="26"/>
    </location>
</feature>
<feature type="binding site" description="axial binding residue" evidence="1">
    <location>
        <position position="454"/>
    </location>
    <ligand>
        <name>heme</name>
        <dbReference type="ChEBI" id="CHEBI:30413"/>
    </ligand>
    <ligandPart>
        <name>Fe</name>
        <dbReference type="ChEBI" id="CHEBI:18248"/>
    </ligandPart>
</feature>
<feature type="sequence conflict" description="In Ref. 3; AAL11575." evidence="6" ref="3">
    <original>H</original>
    <variation>R</variation>
    <location>
        <position position="385"/>
    </location>
</feature>
<gene>
    <name evidence="5" type="primary">CYP89A9</name>
    <name evidence="7" type="ordered locus">At3g03470</name>
    <name evidence="8" type="ORF">T21P5.11</name>
</gene>